<gene>
    <name type="primary">CD36</name>
</gene>
<feature type="chain" id="PRO_0000144152" description="Platelet glycoprotein 4">
    <location>
        <begin position="1"/>
        <end position="472"/>
    </location>
</feature>
<feature type="topological domain" description="Cytoplasmic" evidence="5">
    <location>
        <begin position="1"/>
        <end position="7"/>
    </location>
</feature>
<feature type="transmembrane region" description="Helical" evidence="5">
    <location>
        <begin position="8"/>
        <end position="29"/>
    </location>
</feature>
<feature type="topological domain" description="Extracellular" evidence="5">
    <location>
        <begin position="30"/>
        <end position="439"/>
    </location>
</feature>
<feature type="transmembrane region" description="Helical" evidence="5">
    <location>
        <begin position="440"/>
        <end position="461"/>
    </location>
</feature>
<feature type="topological domain" description="Cytoplasmic" evidence="5">
    <location>
        <begin position="462"/>
        <end position="472"/>
    </location>
</feature>
<feature type="region of interest" description="Required for interaction with thrombospondins, THBS1 and THBS2" evidence="1">
    <location>
        <begin position="93"/>
        <end position="120"/>
    </location>
</feature>
<feature type="region of interest" description="Interaction with PTK2, PXN and LYN" evidence="2">
    <location>
        <begin position="460"/>
        <end position="472"/>
    </location>
</feature>
<feature type="site" description="Critical for TLR4-TLR6 dimerization and signaling" evidence="2">
    <location>
        <position position="463"/>
    </location>
</feature>
<feature type="lipid moiety-binding region" description="S-palmitoyl cysteine" evidence="1">
    <location>
        <position position="3"/>
    </location>
</feature>
<feature type="lipid moiety-binding region" description="S-palmitoyl cysteine" evidence="1">
    <location>
        <position position="7"/>
    </location>
</feature>
<feature type="lipid moiety-binding region" description="S-palmitoyl cysteine" evidence="1">
    <location>
        <position position="464"/>
    </location>
</feature>
<feature type="lipid moiety-binding region" description="S-palmitoyl cysteine" evidence="1">
    <location>
        <position position="466"/>
    </location>
</feature>
<feature type="glycosylation site" description="N-linked (GlcNAc...) asparagine" evidence="5">
    <location>
        <position position="79"/>
    </location>
</feature>
<feature type="glycosylation site" description="N-linked (GlcNAc...) asparagine" evidence="5">
    <location>
        <position position="102"/>
    </location>
</feature>
<feature type="glycosylation site" description="N-linked (GlcNAc...) asparagine" evidence="5">
    <location>
        <position position="132"/>
    </location>
</feature>
<feature type="glycosylation site" description="N-linked (GlcNAc...) asparagine" evidence="5">
    <location>
        <position position="205"/>
    </location>
</feature>
<feature type="glycosylation site" description="N-linked (GlcNAc...) asparagine" evidence="5">
    <location>
        <position position="235"/>
    </location>
</feature>
<feature type="glycosylation site" description="N-linked (GlcNAc...) asparagine" evidence="5">
    <location>
        <position position="247"/>
    </location>
</feature>
<feature type="glycosylation site" description="N-linked (GlcNAc...) asparagine" evidence="5">
    <location>
        <position position="321"/>
    </location>
</feature>
<feature type="glycosylation site" description="N-linked (GlcNAc...) asparagine" evidence="5">
    <location>
        <position position="417"/>
    </location>
</feature>
<feature type="disulfide bond" evidence="1">
    <location>
        <begin position="243"/>
        <end position="311"/>
    </location>
</feature>
<feature type="disulfide bond" evidence="1">
    <location>
        <begin position="272"/>
        <end position="333"/>
    </location>
</feature>
<feature type="disulfide bond" evidence="1">
    <location>
        <begin position="313"/>
        <end position="322"/>
    </location>
</feature>
<feature type="cross-link" description="Glycyl lysine isopeptide (Lys-Gly) (interchain with G-Cter in ubiquitin)" evidence="2">
    <location>
        <position position="469"/>
    </location>
</feature>
<feature type="cross-link" description="Glycyl lysine isopeptide (Lys-Gly) (interchain with G-Cter in ubiquitin)" evidence="2">
    <location>
        <position position="472"/>
    </location>
</feature>
<organism>
    <name type="scientific">Mesocricetus auratus</name>
    <name type="common">Golden hamster</name>
    <dbReference type="NCBI Taxonomy" id="10036"/>
    <lineage>
        <taxon>Eukaryota</taxon>
        <taxon>Metazoa</taxon>
        <taxon>Chordata</taxon>
        <taxon>Craniata</taxon>
        <taxon>Vertebrata</taxon>
        <taxon>Euteleostomi</taxon>
        <taxon>Mammalia</taxon>
        <taxon>Eutheria</taxon>
        <taxon>Euarchontoglires</taxon>
        <taxon>Glires</taxon>
        <taxon>Rodentia</taxon>
        <taxon>Myomorpha</taxon>
        <taxon>Muroidea</taxon>
        <taxon>Cricetidae</taxon>
        <taxon>Cricetinae</taxon>
        <taxon>Mesocricetus</taxon>
    </lineage>
</organism>
<name>CD36_MESAU</name>
<keyword id="KW-0130">Cell adhesion</keyword>
<keyword id="KW-1003">Cell membrane</keyword>
<keyword id="KW-1015">Disulfide bond</keyword>
<keyword id="KW-0325">Glycoprotein</keyword>
<keyword id="KW-0333">Golgi apparatus</keyword>
<keyword id="KW-1017">Isopeptide bond</keyword>
<keyword id="KW-0445">Lipid transport</keyword>
<keyword id="KW-0449">Lipoprotein</keyword>
<keyword id="KW-0472">Membrane</keyword>
<keyword id="KW-0564">Palmitate</keyword>
<keyword id="KW-0675">Receptor</keyword>
<keyword id="KW-1185">Reference proteome</keyword>
<keyword id="KW-0812">Transmembrane</keyword>
<keyword id="KW-1133">Transmembrane helix</keyword>
<keyword id="KW-0813">Transport</keyword>
<keyword id="KW-0832">Ubl conjugation</keyword>
<sequence length="472" mass="52871">MGCDRNCGLIAGAVIGAVLAVFGGILMPVGDMLVEKTIKKEVVLEEGTIAFKNWVKTGTTVYRQFWIFDVQNPDEVAVNSSKIKVKQRGPYTYRVRYLAKENITQDPVDSTVSFVQPNGAIFEPSLSVGTENDTFTILNLAVAAAPHIYTNSFVQVVLNSLIKKSKSSMFQTRTLRELLWGYKDPFLSLVPYPIPTTVGVFYPYNDTADGVYKVFNGKDDINKVAIIDSYKGKRNLSYWESYCDMINGTDAASFPPFVEKSRVLRFFSSDICRSIYAVFGSDIELKGIPVYRFILPAKAFASPVQNPDNHCFCTEKVISNNCTSYGVLDISKCKQGRPVYISLPHFLHASPDISEPIEGLNPNEEEHRTYLDVEPITGFTLQFAKRLQVNILVKPARKIEALKNLKRNYIVPILWLNETGTIGDEKAEMFRNQVTGKVKLLGLVEMVLLGLGVVMFVAFMISYCACRSKNRK</sequence>
<proteinExistence type="evidence at transcript level"/>
<dbReference type="EMBL" id="U42430">
    <property type="protein sequence ID" value="AAB18646.1"/>
    <property type="molecule type" value="mRNA"/>
</dbReference>
<dbReference type="SMR" id="P70110"/>
<dbReference type="STRING" id="10036.ENSMAUP00000000743"/>
<dbReference type="GlyCosmos" id="P70110">
    <property type="glycosylation" value="8 sites, No reported glycans"/>
</dbReference>
<dbReference type="eggNOG" id="KOG3776">
    <property type="taxonomic scope" value="Eukaryota"/>
</dbReference>
<dbReference type="Proteomes" id="UP000189706">
    <property type="component" value="Unplaced"/>
</dbReference>
<dbReference type="GO" id="GO:0016324">
    <property type="term" value="C:apical plasma membrane"/>
    <property type="evidence" value="ECO:0007669"/>
    <property type="project" value="UniProtKB-SubCell"/>
</dbReference>
<dbReference type="GO" id="GO:0031526">
    <property type="term" value="C:brush border membrane"/>
    <property type="evidence" value="ECO:0000250"/>
    <property type="project" value="UniProtKB"/>
</dbReference>
<dbReference type="GO" id="GO:0005901">
    <property type="term" value="C:caveola"/>
    <property type="evidence" value="ECO:0007669"/>
    <property type="project" value="TreeGrafter"/>
</dbReference>
<dbReference type="GO" id="GO:0009986">
    <property type="term" value="C:cell surface"/>
    <property type="evidence" value="ECO:0007669"/>
    <property type="project" value="TreeGrafter"/>
</dbReference>
<dbReference type="GO" id="GO:0005794">
    <property type="term" value="C:Golgi apparatus"/>
    <property type="evidence" value="ECO:0000250"/>
    <property type="project" value="UniProtKB"/>
</dbReference>
<dbReference type="GO" id="GO:0016020">
    <property type="term" value="C:membrane"/>
    <property type="evidence" value="ECO:0000250"/>
    <property type="project" value="UniProtKB"/>
</dbReference>
<dbReference type="GO" id="GO:0045121">
    <property type="term" value="C:membrane raft"/>
    <property type="evidence" value="ECO:0000250"/>
    <property type="project" value="UniProtKB"/>
</dbReference>
<dbReference type="GO" id="GO:0030169">
    <property type="term" value="F:low-density lipoprotein particle binding"/>
    <property type="evidence" value="ECO:0007669"/>
    <property type="project" value="TreeGrafter"/>
</dbReference>
<dbReference type="GO" id="GO:0005041">
    <property type="term" value="F:low-density lipoprotein particle receptor activity"/>
    <property type="evidence" value="ECO:0007669"/>
    <property type="project" value="TreeGrafter"/>
</dbReference>
<dbReference type="GO" id="GO:0005044">
    <property type="term" value="F:scavenger receptor activity"/>
    <property type="evidence" value="ECO:0007669"/>
    <property type="project" value="TreeGrafter"/>
</dbReference>
<dbReference type="GO" id="GO:1990000">
    <property type="term" value="P:amyloid fibril formation"/>
    <property type="evidence" value="ECO:0000250"/>
    <property type="project" value="UniProtKB"/>
</dbReference>
<dbReference type="GO" id="GO:0150094">
    <property type="term" value="P:amyloid-beta clearance by cellular catabolic process"/>
    <property type="evidence" value="ECO:0007669"/>
    <property type="project" value="TreeGrafter"/>
</dbReference>
<dbReference type="GO" id="GO:0007155">
    <property type="term" value="P:cell adhesion"/>
    <property type="evidence" value="ECO:0007669"/>
    <property type="project" value="UniProtKB-KW"/>
</dbReference>
<dbReference type="GO" id="GO:0071726">
    <property type="term" value="P:cellular response to diacyl bacterial lipopeptide"/>
    <property type="evidence" value="ECO:0000250"/>
    <property type="project" value="UniProtKB"/>
</dbReference>
<dbReference type="GO" id="GO:0071404">
    <property type="term" value="P:cellular response to low-density lipoprotein particle stimulus"/>
    <property type="evidence" value="ECO:0000250"/>
    <property type="project" value="UniProtKB"/>
</dbReference>
<dbReference type="GO" id="GO:0070508">
    <property type="term" value="P:cholesterol import"/>
    <property type="evidence" value="ECO:0000250"/>
    <property type="project" value="UniProtKB"/>
</dbReference>
<dbReference type="GO" id="GO:0097009">
    <property type="term" value="P:energy homeostasis"/>
    <property type="evidence" value="ECO:0000250"/>
    <property type="project" value="UniProtKB"/>
</dbReference>
<dbReference type="GO" id="GO:0050892">
    <property type="term" value="P:intestinal absorption"/>
    <property type="evidence" value="ECO:0000250"/>
    <property type="project" value="UniProtKB"/>
</dbReference>
<dbReference type="GO" id="GO:0030299">
    <property type="term" value="P:intestinal cholesterol absorption"/>
    <property type="evidence" value="ECO:0000250"/>
    <property type="project" value="UniProtKB"/>
</dbReference>
<dbReference type="GO" id="GO:0019915">
    <property type="term" value="P:lipid storage"/>
    <property type="evidence" value="ECO:0007669"/>
    <property type="project" value="TreeGrafter"/>
</dbReference>
<dbReference type="GO" id="GO:0042953">
    <property type="term" value="P:lipoprotein transport"/>
    <property type="evidence" value="ECO:0007669"/>
    <property type="project" value="TreeGrafter"/>
</dbReference>
<dbReference type="GO" id="GO:0044539">
    <property type="term" value="P:long-chain fatty acid import into cell"/>
    <property type="evidence" value="ECO:0000250"/>
    <property type="project" value="UniProtKB"/>
</dbReference>
<dbReference type="GO" id="GO:0034383">
    <property type="term" value="P:low-density lipoprotein particle clearance"/>
    <property type="evidence" value="ECO:0007669"/>
    <property type="project" value="TreeGrafter"/>
</dbReference>
<dbReference type="GO" id="GO:0007204">
    <property type="term" value="P:positive regulation of cytosolic calcium ion concentration"/>
    <property type="evidence" value="ECO:0000250"/>
    <property type="project" value="UniProtKB"/>
</dbReference>
<dbReference type="GO" id="GO:0070374">
    <property type="term" value="P:positive regulation of ERK1 and ERK2 cascade"/>
    <property type="evidence" value="ECO:0000250"/>
    <property type="project" value="UniProtKB"/>
</dbReference>
<dbReference type="GO" id="GO:0032731">
    <property type="term" value="P:positive regulation of interleukin-1 beta production"/>
    <property type="evidence" value="ECO:0000250"/>
    <property type="project" value="UniProtKB"/>
</dbReference>
<dbReference type="GO" id="GO:1900227">
    <property type="term" value="P:positive regulation of NLRP3 inflammasome complex assembly"/>
    <property type="evidence" value="ECO:0000250"/>
    <property type="project" value="UniProtKB"/>
</dbReference>
<dbReference type="GO" id="GO:0031623">
    <property type="term" value="P:receptor internalization"/>
    <property type="evidence" value="ECO:0000250"/>
    <property type="project" value="UniProtKB"/>
</dbReference>
<dbReference type="GO" id="GO:0070542">
    <property type="term" value="P:response to fatty acid"/>
    <property type="evidence" value="ECO:0000250"/>
    <property type="project" value="UniProtKB"/>
</dbReference>
<dbReference type="GO" id="GO:0070543">
    <property type="term" value="P:response to linoleic acid"/>
    <property type="evidence" value="ECO:0000250"/>
    <property type="project" value="UniProtKB"/>
</dbReference>
<dbReference type="GO" id="GO:0033993">
    <property type="term" value="P:response to lipid"/>
    <property type="evidence" value="ECO:0000250"/>
    <property type="project" value="UniProtKB"/>
</dbReference>
<dbReference type="GO" id="GO:0050909">
    <property type="term" value="P:sensory perception of taste"/>
    <property type="evidence" value="ECO:0000250"/>
    <property type="project" value="UniProtKB"/>
</dbReference>
<dbReference type="GO" id="GO:0034197">
    <property type="term" value="P:triglyceride transport"/>
    <property type="evidence" value="ECO:0000250"/>
    <property type="project" value="UniProtKB"/>
</dbReference>
<dbReference type="InterPro" id="IPR005428">
    <property type="entry name" value="CD36/SCARB1/SNMP1"/>
</dbReference>
<dbReference type="InterPro" id="IPR002159">
    <property type="entry name" value="CD36_fam"/>
</dbReference>
<dbReference type="PANTHER" id="PTHR11923:SF12">
    <property type="entry name" value="PLATELET GLYCOPROTEIN 4"/>
    <property type="match status" value="1"/>
</dbReference>
<dbReference type="PANTHER" id="PTHR11923">
    <property type="entry name" value="SCAVENGER RECEPTOR CLASS B TYPE-1 SR-B1"/>
    <property type="match status" value="1"/>
</dbReference>
<dbReference type="Pfam" id="PF01130">
    <property type="entry name" value="CD36"/>
    <property type="match status" value="1"/>
</dbReference>
<dbReference type="PRINTS" id="PR01610">
    <property type="entry name" value="CD36ANTIGEN"/>
</dbReference>
<dbReference type="PRINTS" id="PR01609">
    <property type="entry name" value="CD36FAMILY"/>
</dbReference>
<protein>
    <recommendedName>
        <fullName>Platelet glycoprotein 4</fullName>
    </recommendedName>
    <alternativeName>
        <fullName>Glycoprotein IIIb</fullName>
        <shortName>GPIIIB</shortName>
    </alternativeName>
    <alternativeName>
        <fullName>PAS IV</fullName>
    </alternativeName>
    <alternativeName>
        <fullName>PAS-4</fullName>
    </alternativeName>
    <alternativeName>
        <fullName>Platelet glycoprotein IV</fullName>
        <shortName>GPIV</shortName>
    </alternativeName>
    <cdAntigenName>CD36</cdAntigenName>
</protein>
<evidence type="ECO:0000250" key="1"/>
<evidence type="ECO:0000250" key="2">
    <source>
        <dbReference type="UniProtKB" id="P16671"/>
    </source>
</evidence>
<evidence type="ECO:0000250" key="3">
    <source>
        <dbReference type="UniProtKB" id="Q07969"/>
    </source>
</evidence>
<evidence type="ECO:0000250" key="4">
    <source>
        <dbReference type="UniProtKB" id="Q08857"/>
    </source>
</evidence>
<evidence type="ECO:0000255" key="5"/>
<evidence type="ECO:0000305" key="6"/>
<comment type="function">
    <text evidence="2 3 4">Multifunctional glycoprotein that acts as a receptor for a broad range of ligands. Ligands can be of proteinaceous nature like thrombospondin, fibronectin, collagen or amyloid-beta as well as of lipidic nature such as oxidized low-density lipoprotein (oxLDL), anionic phospholipids, long-chain fatty acids and bacterial diacylated lipopeptides. They are generally multivalent and can therefore engage multiple receptors simultaneously, the resulting formation of CD36 clusters initiates signal transduction and internalization of receptor-ligand complexes. The dependency on coreceptor signaling is strongly ligand specific. Cellular responses to these ligands are involved in angiogenesis, inflammatory response, fatty acid metabolism, taste and dietary fat processing in the intestine (By similarity). Binds long-chain fatty acids and facilitates their transport into cells, thus participating in muscle lipid utilization, adipose energy storage, and gut fat absorption (By similarity). Mechanistically, binding of fatty acids activates downstream kinase LYN, which phosphorylates the palmitoyltransferase ZDHHC5 and inactivates it, resulting in the subsequent depalmitoylation of CD36 and caveolar endocytosis (By similarity). In the small intestine, plays a role in proximal absorption of dietary fatty acid and cholesterol for optimal chylomicron formation, possibly through the activation of MAPK1/3 (ERK1/2) signaling pathway (By similarity). Involved in oral fat perception and preferences (By similarity). Detection into the tongue of long-chain fatty acids leads to a rapid and sustained rise in flux and protein content of pancreatobiliary secretions (By similarity). In taste receptor cells, mediates the induction of an increase in intracellular calcium levels by long-chain fatty acids, leading to the activation of the gustatory neurons in the nucleus of the solitary tract (By similarity). Important factor in both ventromedial hypothalamus neuronal sensing of long-chain fatty acid and the regulation of energy and glucose homeostasis (By similarity). Receptor for thrombospondins, THBS1 and THBS2, mediating their antiangiogenic effects (By similarity). As a coreceptor for TLR4:TLR6 heterodimer, promotes inflammation in monocytes/macrophages. Upon ligand binding, such as oxLDL or amyloid-beta 42, interacts with the heterodimer TLR4:TLR6, the complex is internalized and triggers inflammatory response, leading to NF-kappa-B-dependent production of CXCL1, CXCL2 and CCL9 cytokines, via MYD88 signaling pathway, and CCL5 cytokine, via TICAM1 signaling pathway, as well as IL1B secretion, through the priming and activation of the NLRP3 inflammasome. Selective and nonredundant sensor of microbial diacylated lipopeptide that signal via TLR2:TLR6 heterodimer, this cluster triggers signaling from the cell surface, leading to the NF-kappa-B-dependent production of TNF, via MYD88 signaling pathway and subsequently is targeted to the Golgi in a lipid-raft dependent pathway (By similarity).</text>
</comment>
<comment type="catalytic activity">
    <reaction evidence="2">
        <text>butanoate(out) = butanoate(in)</text>
        <dbReference type="Rhea" id="RHEA:45248"/>
        <dbReference type="ChEBI" id="CHEBI:17968"/>
    </reaction>
    <physiologicalReaction direction="left-to-right" evidence="2">
        <dbReference type="Rhea" id="RHEA:45249"/>
    </physiologicalReaction>
</comment>
<comment type="catalytic activity">
    <reaction evidence="2">
        <text>(9Z)-octadecenoate(out) = (9Z)-octadecenoate(in)</text>
        <dbReference type="Rhea" id="RHEA:33655"/>
        <dbReference type="ChEBI" id="CHEBI:30823"/>
    </reaction>
    <physiologicalReaction direction="left-to-right" evidence="2">
        <dbReference type="Rhea" id="RHEA:33656"/>
    </physiologicalReaction>
</comment>
<comment type="catalytic activity">
    <reaction evidence="2">
        <text>(9Z,12Z)-octadecadienoate(out) = (9Z,12Z)-octadecadienoate(in)</text>
        <dbReference type="Rhea" id="RHEA:45264"/>
        <dbReference type="ChEBI" id="CHEBI:30245"/>
    </reaction>
    <physiologicalReaction direction="left-to-right" evidence="2">
        <dbReference type="Rhea" id="RHEA:45265"/>
    </physiologicalReaction>
</comment>
<comment type="catalytic activity">
    <reaction evidence="2">
        <text>tetradecanoate(out) = tetradecanoate(in)</text>
        <dbReference type="Rhea" id="RHEA:45252"/>
        <dbReference type="ChEBI" id="CHEBI:30807"/>
    </reaction>
    <physiologicalReaction direction="left-to-right" evidence="2">
        <dbReference type="Rhea" id="RHEA:45253"/>
    </physiologicalReaction>
</comment>
<comment type="catalytic activity">
    <reaction evidence="2">
        <text>hexadecanoate(out) = hexadecanoate(in)</text>
        <dbReference type="Rhea" id="RHEA:45256"/>
        <dbReference type="ChEBI" id="CHEBI:7896"/>
    </reaction>
    <physiologicalReaction direction="left-to-right" evidence="2">
        <dbReference type="Rhea" id="RHEA:45257"/>
    </physiologicalReaction>
</comment>
<comment type="catalytic activity">
    <reaction evidence="2">
        <text>tetracosanoate(out) = tetracosanoate(in)</text>
        <dbReference type="Rhea" id="RHEA:45260"/>
        <dbReference type="ChEBI" id="CHEBI:31014"/>
    </reaction>
    <physiologicalReaction direction="left-to-right" evidence="2">
        <dbReference type="Rhea" id="RHEA:45261"/>
    </physiologicalReaction>
</comment>
<comment type="subunit">
    <text evidence="2 4">Interacts with THBS1 and THBS2; the interactions mediate the THBS antiangiogenic activity. Upon interaction with a ligand, such as oxidized low-density lipoprotein (oxLDL) or amyloid-beta 42, rapidly forms a complex with TLR4 and TLR6; the complex is internalized and triggers an inflammatory signal. Through its C-terminus, interacts with PTK2, PXN and LYN, but not with SRC. LYN kinase activity is required for facilitating TLR4:TLR6 heterodimerization and signal initiation. Upon interaction with ligands such as diacylated lipopeptides, interacts with the TLR2:TLR6 heterodimer (By similarity). Interacts with CD9, CD81, FCER1G, ITGB2 and/or ITGB2; forming a membrane heteromeric complex required for the internalization of CD36 and its ligands (By similarity). Interacts (when palmitoylated) with ARF6; this interaction mediates CD36 transport to the plasma membrane (By similarity).</text>
</comment>
<comment type="subcellular location">
    <subcellularLocation>
        <location evidence="2">Cell membrane</location>
        <topology evidence="5">Multi-pass membrane protein</topology>
    </subcellularLocation>
    <subcellularLocation>
        <location evidence="2">Membrane raft</location>
    </subcellularLocation>
    <subcellularLocation>
        <location evidence="2">Golgi apparatus</location>
    </subcellularLocation>
    <subcellularLocation>
        <location evidence="4">Apical cell membrane</location>
    </subcellularLocation>
    <text evidence="2">Upon ligand-binding, internalized through dynamin-dependent endocytosis.</text>
</comment>
<comment type="PTM">
    <text evidence="2">Palmitoylated by ZDHHC5. Palmitoylation is required for proper localization at the plasma membrane.</text>
</comment>
<comment type="PTM">
    <text evidence="2 4">Ubiquitinated at Lys-469 and Lys-472. Ubiquitination is induced by fatty acids such as oleic acid and leads to degradation by the proteasome. Ubiquitination and degradation are inhibited by insulin which blocks the effect of fatty acids.</text>
</comment>
<comment type="similarity">
    <text evidence="6">Belongs to the CD36 family.</text>
</comment>
<reference key="1">
    <citation type="submission" date="1995-12" db="EMBL/GenBank/DDBJ databases">
        <authorList>
            <person name="Huang X."/>
            <person name="Acton L.S."/>
            <person name="Penman M."/>
            <person name="Krieger M."/>
        </authorList>
    </citation>
    <scope>NUCLEOTIDE SEQUENCE [MRNA]</scope>
</reference>
<accession>P70110</accession>